<sequence>MIDLKLLRENPDAVRRSQLSRGEDPALVDALLTADAARRAVISTADSLRAEQKAASKSVGGASPEERPPLLRRAKELAEQVKAAEADEVEAEAAFTAAHLAISNVIVDGVPAGGEDDYAVLDVVGEPSYLENPKDHLELGESLGLIDMQRGAKVSGSRFYFLTGRGALLQLGLLQLALKLAVDNGFVPTIPPVLVRPEVMVGTGFLGAHAEEVYRVEGDGLYLVGTSEVPLAGYHSGEILDLSRGPLRYAGWSSCFRREAGSHGKDTRGIIRVHQFDKVEGFVYCTPADAEHEHERLLGWQRQMLARIEVPYRVIDVAAGDLGSSAARKFDCEAWIPTQGAYRELTSTSNCTTFQARRLATRYRDASGKPQIAATLNGTLATTRWLVAILENHQRPDGSVRVPDALVPFVGVEVLEPVA</sequence>
<feature type="chain" id="PRO_0000428480" description="Serine--tRNA ligase">
    <location>
        <begin position="1"/>
        <end position="419"/>
    </location>
</feature>
<feature type="binding site" evidence="1">
    <location>
        <begin position="226"/>
        <end position="228"/>
    </location>
    <ligand>
        <name>L-serine</name>
        <dbReference type="ChEBI" id="CHEBI:33384"/>
    </ligand>
</feature>
<feature type="binding site" evidence="1">
    <location>
        <begin position="257"/>
        <end position="259"/>
    </location>
    <ligand>
        <name>ATP</name>
        <dbReference type="ChEBI" id="CHEBI:30616"/>
    </ligand>
</feature>
<feature type="binding site" evidence="1">
    <location>
        <position position="273"/>
    </location>
    <ligand>
        <name>ATP</name>
        <dbReference type="ChEBI" id="CHEBI:30616"/>
    </ligand>
</feature>
<feature type="binding site" evidence="1">
    <location>
        <position position="280"/>
    </location>
    <ligand>
        <name>L-serine</name>
        <dbReference type="ChEBI" id="CHEBI:33384"/>
    </ligand>
</feature>
<feature type="binding site" evidence="1">
    <location>
        <begin position="344"/>
        <end position="347"/>
    </location>
    <ligand>
        <name>ATP</name>
        <dbReference type="ChEBI" id="CHEBI:30616"/>
    </ligand>
</feature>
<feature type="binding site" evidence="1">
    <location>
        <position position="379"/>
    </location>
    <ligand>
        <name>L-serine</name>
        <dbReference type="ChEBI" id="CHEBI:33384"/>
    </ligand>
</feature>
<accession>P9WFT6</accession>
<accession>L0TDP6</accession>
<accession>P67561</accession>
<accession>P96244</accession>
<evidence type="ECO:0000255" key="1">
    <source>
        <dbReference type="HAMAP-Rule" id="MF_00176"/>
    </source>
</evidence>
<dbReference type="EC" id="6.1.1.11" evidence="1"/>
<dbReference type="EMBL" id="AE000516">
    <property type="protein sequence ID" value="AAK48309.1"/>
    <property type="molecule type" value="Genomic_DNA"/>
</dbReference>
<dbReference type="PIR" id="G70652">
    <property type="entry name" value="G70652"/>
</dbReference>
<dbReference type="RefSeq" id="WP_003420889.1">
    <property type="nucleotide sequence ID" value="NZ_KK341227.1"/>
</dbReference>
<dbReference type="SMR" id="P9WFT6"/>
<dbReference type="GeneID" id="45427835"/>
<dbReference type="KEGG" id="mtc:MT3942"/>
<dbReference type="PATRIC" id="fig|83331.31.peg.4240"/>
<dbReference type="HOGENOM" id="CLU_023797_0_1_11"/>
<dbReference type="UniPathway" id="UPA00906">
    <property type="reaction ID" value="UER00895"/>
</dbReference>
<dbReference type="Proteomes" id="UP000001020">
    <property type="component" value="Chromosome"/>
</dbReference>
<dbReference type="GO" id="GO:0005737">
    <property type="term" value="C:cytoplasm"/>
    <property type="evidence" value="ECO:0007669"/>
    <property type="project" value="UniProtKB-SubCell"/>
</dbReference>
<dbReference type="GO" id="GO:0005524">
    <property type="term" value="F:ATP binding"/>
    <property type="evidence" value="ECO:0007669"/>
    <property type="project" value="UniProtKB-UniRule"/>
</dbReference>
<dbReference type="GO" id="GO:0004828">
    <property type="term" value="F:serine-tRNA ligase activity"/>
    <property type="evidence" value="ECO:0007669"/>
    <property type="project" value="UniProtKB-UniRule"/>
</dbReference>
<dbReference type="GO" id="GO:0016260">
    <property type="term" value="P:selenocysteine biosynthetic process"/>
    <property type="evidence" value="ECO:0007669"/>
    <property type="project" value="UniProtKB-UniRule"/>
</dbReference>
<dbReference type="GO" id="GO:0006434">
    <property type="term" value="P:seryl-tRNA aminoacylation"/>
    <property type="evidence" value="ECO:0007669"/>
    <property type="project" value="UniProtKB-UniRule"/>
</dbReference>
<dbReference type="CDD" id="cd00770">
    <property type="entry name" value="SerRS_core"/>
    <property type="match status" value="1"/>
</dbReference>
<dbReference type="FunFam" id="1.10.287.40:FF:000004">
    <property type="entry name" value="Serine--tRNA ligase"/>
    <property type="match status" value="1"/>
</dbReference>
<dbReference type="FunFam" id="3.30.930.10:FF:000048">
    <property type="entry name" value="Serine--tRNA ligase"/>
    <property type="match status" value="1"/>
</dbReference>
<dbReference type="Gene3D" id="3.30.930.10">
    <property type="entry name" value="Bira Bifunctional Protein, Domain 2"/>
    <property type="match status" value="1"/>
</dbReference>
<dbReference type="Gene3D" id="1.10.287.40">
    <property type="entry name" value="Serine-tRNA synthetase, tRNA binding domain"/>
    <property type="match status" value="1"/>
</dbReference>
<dbReference type="HAMAP" id="MF_00176">
    <property type="entry name" value="Ser_tRNA_synth_type1"/>
    <property type="match status" value="1"/>
</dbReference>
<dbReference type="InterPro" id="IPR002314">
    <property type="entry name" value="aa-tRNA-synt_IIb"/>
</dbReference>
<dbReference type="InterPro" id="IPR006195">
    <property type="entry name" value="aa-tRNA-synth_II"/>
</dbReference>
<dbReference type="InterPro" id="IPR045864">
    <property type="entry name" value="aa-tRNA-synth_II/BPL/LPL"/>
</dbReference>
<dbReference type="InterPro" id="IPR002317">
    <property type="entry name" value="Ser-tRNA-ligase_type_1"/>
</dbReference>
<dbReference type="InterPro" id="IPR015866">
    <property type="entry name" value="Ser-tRNA-synth_1_N"/>
</dbReference>
<dbReference type="InterPro" id="IPR042103">
    <property type="entry name" value="SerRS_1_N_sf"/>
</dbReference>
<dbReference type="InterPro" id="IPR033729">
    <property type="entry name" value="SerRS_core"/>
</dbReference>
<dbReference type="InterPro" id="IPR010978">
    <property type="entry name" value="tRNA-bd_arm"/>
</dbReference>
<dbReference type="NCBIfam" id="TIGR00414">
    <property type="entry name" value="serS"/>
    <property type="match status" value="1"/>
</dbReference>
<dbReference type="PANTHER" id="PTHR11778">
    <property type="entry name" value="SERYL-TRNA SYNTHETASE"/>
    <property type="match status" value="1"/>
</dbReference>
<dbReference type="Pfam" id="PF02403">
    <property type="entry name" value="Seryl_tRNA_N"/>
    <property type="match status" value="1"/>
</dbReference>
<dbReference type="Pfam" id="PF00587">
    <property type="entry name" value="tRNA-synt_2b"/>
    <property type="match status" value="1"/>
</dbReference>
<dbReference type="PIRSF" id="PIRSF001529">
    <property type="entry name" value="Ser-tRNA-synth_IIa"/>
    <property type="match status" value="1"/>
</dbReference>
<dbReference type="PRINTS" id="PR00981">
    <property type="entry name" value="TRNASYNTHSER"/>
</dbReference>
<dbReference type="SUPFAM" id="SSF55681">
    <property type="entry name" value="Class II aaRS and biotin synthetases"/>
    <property type="match status" value="1"/>
</dbReference>
<dbReference type="SUPFAM" id="SSF46589">
    <property type="entry name" value="tRNA-binding arm"/>
    <property type="match status" value="1"/>
</dbReference>
<dbReference type="PROSITE" id="PS50862">
    <property type="entry name" value="AA_TRNA_LIGASE_II"/>
    <property type="match status" value="1"/>
</dbReference>
<comment type="function">
    <text evidence="1">Catalyzes the attachment of serine to tRNA(Ser). Is also able to aminoacylate tRNA(Sec) with serine, to form the misacylated tRNA L-seryl-tRNA(Sec), which will be further converted into selenocysteinyl-tRNA(Sec).</text>
</comment>
<comment type="catalytic activity">
    <reaction evidence="1">
        <text>tRNA(Ser) + L-serine + ATP = L-seryl-tRNA(Ser) + AMP + diphosphate + H(+)</text>
        <dbReference type="Rhea" id="RHEA:12292"/>
        <dbReference type="Rhea" id="RHEA-COMP:9669"/>
        <dbReference type="Rhea" id="RHEA-COMP:9703"/>
        <dbReference type="ChEBI" id="CHEBI:15378"/>
        <dbReference type="ChEBI" id="CHEBI:30616"/>
        <dbReference type="ChEBI" id="CHEBI:33019"/>
        <dbReference type="ChEBI" id="CHEBI:33384"/>
        <dbReference type="ChEBI" id="CHEBI:78442"/>
        <dbReference type="ChEBI" id="CHEBI:78533"/>
        <dbReference type="ChEBI" id="CHEBI:456215"/>
        <dbReference type="EC" id="6.1.1.11"/>
    </reaction>
</comment>
<comment type="catalytic activity">
    <reaction evidence="1">
        <text>tRNA(Sec) + L-serine + ATP = L-seryl-tRNA(Sec) + AMP + diphosphate + H(+)</text>
        <dbReference type="Rhea" id="RHEA:42580"/>
        <dbReference type="Rhea" id="RHEA-COMP:9742"/>
        <dbReference type="Rhea" id="RHEA-COMP:10128"/>
        <dbReference type="ChEBI" id="CHEBI:15378"/>
        <dbReference type="ChEBI" id="CHEBI:30616"/>
        <dbReference type="ChEBI" id="CHEBI:33019"/>
        <dbReference type="ChEBI" id="CHEBI:33384"/>
        <dbReference type="ChEBI" id="CHEBI:78442"/>
        <dbReference type="ChEBI" id="CHEBI:78533"/>
        <dbReference type="ChEBI" id="CHEBI:456215"/>
        <dbReference type="EC" id="6.1.1.11"/>
    </reaction>
</comment>
<comment type="pathway">
    <text evidence="1">Aminoacyl-tRNA biosynthesis; selenocysteinyl-tRNA(Sec) biosynthesis; L-seryl-tRNA(Sec) from L-serine and tRNA(Sec): step 1/1.</text>
</comment>
<comment type="subunit">
    <text evidence="1">Homodimer. The tRNA molecule binds across the dimer.</text>
</comment>
<comment type="subcellular location">
    <subcellularLocation>
        <location evidence="1">Cytoplasm</location>
    </subcellularLocation>
</comment>
<comment type="domain">
    <text evidence="1">Consists of two distinct domains, a catalytic core and a N-terminal extension that is involved in tRNA binding.</text>
</comment>
<comment type="similarity">
    <text evidence="1">Belongs to the class-II aminoacyl-tRNA synthetase family. Type-1 seryl-tRNA synthetase subfamily.</text>
</comment>
<proteinExistence type="inferred from homology"/>
<name>SYS_MYCTO</name>
<gene>
    <name evidence="1" type="primary">serS</name>
    <name type="ordered locus">MT3942</name>
</gene>
<organism>
    <name type="scientific">Mycobacterium tuberculosis (strain CDC 1551 / Oshkosh)</name>
    <dbReference type="NCBI Taxonomy" id="83331"/>
    <lineage>
        <taxon>Bacteria</taxon>
        <taxon>Bacillati</taxon>
        <taxon>Actinomycetota</taxon>
        <taxon>Actinomycetes</taxon>
        <taxon>Mycobacteriales</taxon>
        <taxon>Mycobacteriaceae</taxon>
        <taxon>Mycobacterium</taxon>
        <taxon>Mycobacterium tuberculosis complex</taxon>
    </lineage>
</organism>
<protein>
    <recommendedName>
        <fullName evidence="1">Serine--tRNA ligase</fullName>
        <ecNumber evidence="1">6.1.1.11</ecNumber>
    </recommendedName>
    <alternativeName>
        <fullName evidence="1">Seryl-tRNA synthetase</fullName>
        <shortName evidence="1">SerRS</shortName>
    </alternativeName>
    <alternativeName>
        <fullName evidence="1">Seryl-tRNA(Ser/Sec) synthetase</fullName>
    </alternativeName>
</protein>
<keyword id="KW-0030">Aminoacyl-tRNA synthetase</keyword>
<keyword id="KW-0067">ATP-binding</keyword>
<keyword id="KW-0963">Cytoplasm</keyword>
<keyword id="KW-0436">Ligase</keyword>
<keyword id="KW-0547">Nucleotide-binding</keyword>
<keyword id="KW-0648">Protein biosynthesis</keyword>
<keyword id="KW-1185">Reference proteome</keyword>
<reference key="1">
    <citation type="journal article" date="2002" name="J. Bacteriol.">
        <title>Whole-genome comparison of Mycobacterium tuberculosis clinical and laboratory strains.</title>
        <authorList>
            <person name="Fleischmann R.D."/>
            <person name="Alland D."/>
            <person name="Eisen J.A."/>
            <person name="Carpenter L."/>
            <person name="White O."/>
            <person name="Peterson J.D."/>
            <person name="DeBoy R.T."/>
            <person name="Dodson R.J."/>
            <person name="Gwinn M.L."/>
            <person name="Haft D.H."/>
            <person name="Hickey E.K."/>
            <person name="Kolonay J.F."/>
            <person name="Nelson W.C."/>
            <person name="Umayam L.A."/>
            <person name="Ermolaeva M.D."/>
            <person name="Salzberg S.L."/>
            <person name="Delcher A."/>
            <person name="Utterback T.R."/>
            <person name="Weidman J.F."/>
            <person name="Khouri H.M."/>
            <person name="Gill J."/>
            <person name="Mikula A."/>
            <person name="Bishai W."/>
            <person name="Jacobs W.R. Jr."/>
            <person name="Venter J.C."/>
            <person name="Fraser C.M."/>
        </authorList>
    </citation>
    <scope>NUCLEOTIDE SEQUENCE [LARGE SCALE GENOMIC DNA]</scope>
    <source>
        <strain>CDC 1551 / Oshkosh</strain>
    </source>
</reference>